<sequence length="103" mass="11020">MATYAIVKTGGKQYKVAVGDVVKVEKLESEQGEKVSLPVALVVDGATVTTDAKALAKVAVTGEVLGHTKGPKIRIHKFKNKTGYHKRQGHRQQLTVLKVTGIA</sequence>
<comment type="function">
    <text evidence="1">This protein binds to 23S rRNA in the presence of protein L20.</text>
</comment>
<comment type="subunit">
    <text evidence="1">Part of the 50S ribosomal subunit. Contacts protein L20.</text>
</comment>
<comment type="similarity">
    <text evidence="1">Belongs to the bacterial ribosomal protein bL21 family.</text>
</comment>
<comment type="sequence caution" evidence="2">
    <conflict type="erroneous initiation">
        <sequence resource="EMBL-CDS" id="SIU01084"/>
    </conflict>
    <text>Extended N-terminus.</text>
</comment>
<dbReference type="EMBL" id="LT708304">
    <property type="protein sequence ID" value="SIU01084.1"/>
    <property type="status" value="ALT_INIT"/>
    <property type="molecule type" value="Genomic_DNA"/>
</dbReference>
<dbReference type="RefSeq" id="NP_856116.1">
    <property type="nucleotide sequence ID" value="NC_002945.3"/>
</dbReference>
<dbReference type="SMR" id="P66118"/>
<dbReference type="KEGG" id="mbo:BQ2027_MB2469C"/>
<dbReference type="PATRIC" id="fig|233413.5.peg.2717"/>
<dbReference type="Proteomes" id="UP000001419">
    <property type="component" value="Chromosome"/>
</dbReference>
<dbReference type="GO" id="GO:0005737">
    <property type="term" value="C:cytoplasm"/>
    <property type="evidence" value="ECO:0007669"/>
    <property type="project" value="UniProtKB-ARBA"/>
</dbReference>
<dbReference type="GO" id="GO:1990904">
    <property type="term" value="C:ribonucleoprotein complex"/>
    <property type="evidence" value="ECO:0007669"/>
    <property type="project" value="UniProtKB-KW"/>
</dbReference>
<dbReference type="GO" id="GO:0005840">
    <property type="term" value="C:ribosome"/>
    <property type="evidence" value="ECO:0007669"/>
    <property type="project" value="UniProtKB-KW"/>
</dbReference>
<dbReference type="GO" id="GO:0019843">
    <property type="term" value="F:rRNA binding"/>
    <property type="evidence" value="ECO:0007669"/>
    <property type="project" value="UniProtKB-UniRule"/>
</dbReference>
<dbReference type="GO" id="GO:0003735">
    <property type="term" value="F:structural constituent of ribosome"/>
    <property type="evidence" value="ECO:0007669"/>
    <property type="project" value="InterPro"/>
</dbReference>
<dbReference type="GO" id="GO:0006412">
    <property type="term" value="P:translation"/>
    <property type="evidence" value="ECO:0007669"/>
    <property type="project" value="UniProtKB-UniRule"/>
</dbReference>
<dbReference type="HAMAP" id="MF_01363">
    <property type="entry name" value="Ribosomal_bL21"/>
    <property type="match status" value="1"/>
</dbReference>
<dbReference type="InterPro" id="IPR028909">
    <property type="entry name" value="bL21-like"/>
</dbReference>
<dbReference type="InterPro" id="IPR036164">
    <property type="entry name" value="bL21-like_sf"/>
</dbReference>
<dbReference type="InterPro" id="IPR001787">
    <property type="entry name" value="Ribosomal_bL21"/>
</dbReference>
<dbReference type="InterPro" id="IPR018258">
    <property type="entry name" value="Ribosomal_bL21_CS"/>
</dbReference>
<dbReference type="NCBIfam" id="TIGR00061">
    <property type="entry name" value="L21"/>
    <property type="match status" value="1"/>
</dbReference>
<dbReference type="PANTHER" id="PTHR21349">
    <property type="entry name" value="50S RIBOSOMAL PROTEIN L21"/>
    <property type="match status" value="1"/>
</dbReference>
<dbReference type="PANTHER" id="PTHR21349:SF0">
    <property type="entry name" value="LARGE RIBOSOMAL SUBUNIT PROTEIN BL21M"/>
    <property type="match status" value="1"/>
</dbReference>
<dbReference type="Pfam" id="PF00829">
    <property type="entry name" value="Ribosomal_L21p"/>
    <property type="match status" value="1"/>
</dbReference>
<dbReference type="SUPFAM" id="SSF141091">
    <property type="entry name" value="L21p-like"/>
    <property type="match status" value="1"/>
</dbReference>
<dbReference type="PROSITE" id="PS01169">
    <property type="entry name" value="RIBOSOMAL_L21"/>
    <property type="match status" value="1"/>
</dbReference>
<protein>
    <recommendedName>
        <fullName evidence="1">Large ribosomal subunit protein bL21</fullName>
    </recommendedName>
    <alternativeName>
        <fullName evidence="2">50S ribosomal protein L21</fullName>
    </alternativeName>
</protein>
<keyword id="KW-1185">Reference proteome</keyword>
<keyword id="KW-0687">Ribonucleoprotein</keyword>
<keyword id="KW-0689">Ribosomal protein</keyword>
<keyword id="KW-0694">RNA-binding</keyword>
<keyword id="KW-0699">rRNA-binding</keyword>
<gene>
    <name evidence="1" type="primary">rplU</name>
    <name type="ordered locus">BQ2027_MB2469C</name>
</gene>
<evidence type="ECO:0000255" key="1">
    <source>
        <dbReference type="HAMAP-Rule" id="MF_01363"/>
    </source>
</evidence>
<evidence type="ECO:0000305" key="2"/>
<reference key="1">
    <citation type="journal article" date="2003" name="Proc. Natl. Acad. Sci. U.S.A.">
        <title>The complete genome sequence of Mycobacterium bovis.</title>
        <authorList>
            <person name="Garnier T."/>
            <person name="Eiglmeier K."/>
            <person name="Camus J.-C."/>
            <person name="Medina N."/>
            <person name="Mansoor H."/>
            <person name="Pryor M."/>
            <person name="Duthoy S."/>
            <person name="Grondin S."/>
            <person name="Lacroix C."/>
            <person name="Monsempe C."/>
            <person name="Simon S."/>
            <person name="Harris B."/>
            <person name="Atkin R."/>
            <person name="Doggett J."/>
            <person name="Mayes R."/>
            <person name="Keating L."/>
            <person name="Wheeler P.R."/>
            <person name="Parkhill J."/>
            <person name="Barrell B.G."/>
            <person name="Cole S.T."/>
            <person name="Gordon S.V."/>
            <person name="Hewinson R.G."/>
        </authorList>
    </citation>
    <scope>NUCLEOTIDE SEQUENCE [LARGE SCALE GENOMIC DNA]</scope>
    <source>
        <strain>ATCC BAA-935 / AF2122/97</strain>
    </source>
</reference>
<reference key="2">
    <citation type="journal article" date="2017" name="Genome Announc.">
        <title>Updated reference genome sequence and annotation of Mycobacterium bovis AF2122/97.</title>
        <authorList>
            <person name="Malone K.M."/>
            <person name="Farrell D."/>
            <person name="Stuber T.P."/>
            <person name="Schubert O.T."/>
            <person name="Aebersold R."/>
            <person name="Robbe-Austerman S."/>
            <person name="Gordon S.V."/>
        </authorList>
    </citation>
    <scope>NUCLEOTIDE SEQUENCE [LARGE SCALE GENOMIC DNA]</scope>
    <scope>GENOME REANNOTATION</scope>
    <source>
        <strain>ATCC BAA-935 / AF2122/97</strain>
    </source>
</reference>
<proteinExistence type="inferred from homology"/>
<accession>P66118</accession>
<accession>A0A1R3Y3E2</accession>
<accession>P71907</accession>
<accession>X2BKR3</accession>
<organism>
    <name type="scientific">Mycobacterium bovis (strain ATCC BAA-935 / AF2122/97)</name>
    <dbReference type="NCBI Taxonomy" id="233413"/>
    <lineage>
        <taxon>Bacteria</taxon>
        <taxon>Bacillati</taxon>
        <taxon>Actinomycetota</taxon>
        <taxon>Actinomycetes</taxon>
        <taxon>Mycobacteriales</taxon>
        <taxon>Mycobacteriaceae</taxon>
        <taxon>Mycobacterium</taxon>
        <taxon>Mycobacterium tuberculosis complex</taxon>
    </lineage>
</organism>
<feature type="chain" id="PRO_0000181008" description="Large ribosomal subunit protein bL21">
    <location>
        <begin position="1"/>
        <end position="103"/>
    </location>
</feature>
<name>RL21_MYCBO</name>